<comment type="function">
    <text evidence="1 4 8 9">Key regulator of TP53BP1 that plays a key role in the repair of double-strand DNA breaks (DSBs) in response to DNA damage: acts by promoting non-homologous end joining (NHEJ)-mediated repair of DSBs (PubMed:15342490, PubMed:28241136). In response to DNA damage, interacts with ATM-phosphorylated TP53BP1 (PubMed:23333306, PubMed:28241136). Interaction with TP53BP1 leads to dissociate the interaction between NUDT16L1/TIRR and TP53BP1, thereby unmasking the tandem Tudor-like domain of TP53BP1 and allowing recruitment to DNA DSBs (PubMed:28241136). Once recruited to DSBs, RIF1 and TP53BP1 act by promoting NHEJ-mediated repair of DSBs (PubMed:23333306). In the same time, RIF1 and TP53BP1 specifically counteract the function of BRCA1 by blocking DSBs resection via homologous recombination (HR) during G1 phase (PubMed:23333306). Also required for immunoglobulin class-switch recombination (CSR) during antibody genesis, a process that involves the generation of DNA DSBs (By similarity). Promotes NHEJ of dysfunctional telomeres (By similarity).</text>
</comment>
<comment type="subunit">
    <text evidence="1 8 9 10 11 12">Interacts with TP53BP1 (when phosphorylated by ATM) (PubMed:23333306, PubMed:28241136). May interact with TRF2 (By similarity). Interacts with SHLD2 (PubMed:29789392). Interacts with ERCC6 (via WHD region) (PubMed:29203878). Interacts with ASTE1 (PubMed:34354233).</text>
</comment>
<comment type="interaction">
    <interactant intactId="EBI-711331">
        <id>Q5UIP0</id>
    </interactant>
    <interactant intactId="EBI-357253">
        <id>P62136</id>
        <label>PPP1CA</label>
    </interactant>
    <organismsDiffer>false</organismsDiffer>
    <experiments>5</experiments>
</comment>
<comment type="subcellular location">
    <subcellularLocation>
        <location evidence="5">Nucleus</location>
    </subcellularLocation>
    <subcellularLocation>
        <location evidence="1">Chromosome</location>
    </subcellularLocation>
    <subcellularLocation>
        <location evidence="4 5">Chromosome</location>
        <location evidence="4 5">Telomere</location>
    </subcellularLocation>
    <subcellularLocation>
        <location evidence="5">Cytoplasm</location>
        <location evidence="5">Cytoskeleton</location>
        <location evidence="5">Spindle</location>
    </subcellularLocation>
    <text evidence="1 4 5">Following interaction with TP53BP1, recruited to sites of DNA damage, such as DSBs (By similarity). Exhibits ATM- and TP53BP1-dependent localization to uncapped or aberrant telomeres and to DNA double strand breaks (DSBs) (PubMed:15342490). Does not associate with normal telomere structures (PubMed:15342490, PubMed:15583028). Localizes to microtubules of the midzone of the mitotic spindle during anaphase, and to condensed chromosomes in telophase (PubMed:15583028).</text>
</comment>
<comment type="alternative products">
    <event type="alternative splicing"/>
    <isoform>
        <id>Q5UIP0-1</id>
        <name>1</name>
        <sequence type="displayed"/>
    </isoform>
    <isoform>
        <id>Q5UIP0-2</id>
        <name>2</name>
        <sequence type="described" ref="VSP_014431"/>
    </isoform>
</comment>
<comment type="tissue specificity">
    <text evidence="5">Highly expressed in testis.</text>
</comment>
<comment type="developmental stage">
    <text evidence="5">Expression peaks in late G2/S phase of the cell cycle.</text>
</comment>
<comment type="similarity">
    <text evidence="17">Belongs to the RIF1 family.</text>
</comment>
<comment type="sequence caution" evidence="17">
    <conflict type="erroneous initiation">
        <sequence resource="EMBL-CDS" id="BAA91705"/>
    </conflict>
    <text>Truncated N-terminus.</text>
</comment>
<comment type="sequence caution" evidence="17">
    <conflict type="erroneous initiation">
        <sequence resource="EMBL-CDS" id="BAB14313"/>
    </conflict>
    <text>Truncated N-terminus.</text>
</comment>
<comment type="sequence caution" evidence="17">
    <conflict type="erroneous initiation">
        <sequence resource="EMBL-CDS" id="BAB14792"/>
    </conflict>
    <text>Truncated N-terminus.</text>
</comment>
<comment type="sequence caution" evidence="17">
    <conflict type="erroneous initiation">
        <sequence resource="EMBL-CDS" id="BAB85058"/>
    </conflict>
    <text>Truncated N-terminus.</text>
</comment>
<comment type="sequence caution" evidence="17">
    <conflict type="frameshift">
        <sequence resource="EMBL-CDS" id="CAI45961"/>
    </conflict>
</comment>
<keyword id="KW-0025">Alternative splicing</keyword>
<keyword id="KW-0131">Cell cycle</keyword>
<keyword id="KW-0158">Chromosome</keyword>
<keyword id="KW-0963">Cytoplasm</keyword>
<keyword id="KW-0206">Cytoskeleton</keyword>
<keyword id="KW-0227">DNA damage</keyword>
<keyword id="KW-0234">DNA repair</keyword>
<keyword id="KW-0539">Nucleus</keyword>
<keyword id="KW-0597">Phosphoprotein</keyword>
<keyword id="KW-1267">Proteomics identification</keyword>
<keyword id="KW-1185">Reference proteome</keyword>
<keyword id="KW-0779">Telomere</keyword>
<evidence type="ECO:0000250" key="1">
    <source>
        <dbReference type="UniProtKB" id="Q6PR54"/>
    </source>
</evidence>
<evidence type="ECO:0000256" key="2">
    <source>
        <dbReference type="SAM" id="MobiDB-lite"/>
    </source>
</evidence>
<evidence type="ECO:0000269" key="3">
    <source>
    </source>
</evidence>
<evidence type="ECO:0000269" key="4">
    <source>
    </source>
</evidence>
<evidence type="ECO:0000269" key="5">
    <source>
    </source>
</evidence>
<evidence type="ECO:0000269" key="6">
    <source>
    </source>
</evidence>
<evidence type="ECO:0000269" key="7">
    <source>
    </source>
</evidence>
<evidence type="ECO:0000269" key="8">
    <source>
    </source>
</evidence>
<evidence type="ECO:0000269" key="9">
    <source>
    </source>
</evidence>
<evidence type="ECO:0000269" key="10">
    <source>
    </source>
</evidence>
<evidence type="ECO:0000269" key="11">
    <source>
    </source>
</evidence>
<evidence type="ECO:0000269" key="12">
    <source>
    </source>
</evidence>
<evidence type="ECO:0000269" key="13">
    <source>
    </source>
</evidence>
<evidence type="ECO:0000303" key="14">
    <source>
    </source>
</evidence>
<evidence type="ECO:0000303" key="15">
    <source>
    </source>
</evidence>
<evidence type="ECO:0000303" key="16">
    <source>
    </source>
</evidence>
<evidence type="ECO:0000305" key="17"/>
<evidence type="ECO:0000305" key="18">
    <source>
    </source>
</evidence>
<evidence type="ECO:0000312" key="19">
    <source>
        <dbReference type="HGNC" id="HGNC:23207"/>
    </source>
</evidence>
<evidence type="ECO:0007744" key="20">
    <source>
    </source>
</evidence>
<evidence type="ECO:0007744" key="21">
    <source>
    </source>
</evidence>
<evidence type="ECO:0007744" key="22">
    <source>
    </source>
</evidence>
<evidence type="ECO:0007744" key="23">
    <source>
    </source>
</evidence>
<evidence type="ECO:0007744" key="24">
    <source>
    </source>
</evidence>
<evidence type="ECO:0007744" key="25">
    <source>
    </source>
</evidence>
<evidence type="ECO:0007744" key="26">
    <source>
    </source>
</evidence>
<evidence type="ECO:0007744" key="27">
    <source>
    </source>
</evidence>
<name>RIF1_HUMAN</name>
<reference key="1">
    <citation type="journal article" date="2004" name="Genes Dev.">
        <title>Human Rif1, ortholog of a yeast telomeric protein, is regulated by ATM and 53BP1 and functions in the S-phase checkpoint.</title>
        <authorList>
            <person name="Silverman J."/>
            <person name="Takai H."/>
            <person name="Buonomo S.B.C."/>
            <person name="Eisenhaber F."/>
            <person name="De Lange T."/>
        </authorList>
    </citation>
    <scope>NUCLEOTIDE SEQUENCE [MRNA] (ISOFORM 1)</scope>
    <scope>FUNCTION</scope>
    <scope>SUBCELLULAR LOCATION</scope>
    <scope>VARIANTS TYR-2021 AND VAL-2418</scope>
</reference>
<reference key="2">
    <citation type="journal article" date="2005" name="Nature">
        <title>Generation and annotation of the DNA sequences of human chromosomes 2 and 4.</title>
        <authorList>
            <person name="Hillier L.W."/>
            <person name="Graves T.A."/>
            <person name="Fulton R.S."/>
            <person name="Fulton L.A."/>
            <person name="Pepin K.H."/>
            <person name="Minx P."/>
            <person name="Wagner-McPherson C."/>
            <person name="Layman D."/>
            <person name="Wylie K."/>
            <person name="Sekhon M."/>
            <person name="Becker M.C."/>
            <person name="Fewell G.A."/>
            <person name="Delehaunty K.D."/>
            <person name="Miner T.L."/>
            <person name="Nash W.E."/>
            <person name="Kremitzki C."/>
            <person name="Oddy L."/>
            <person name="Du H."/>
            <person name="Sun H."/>
            <person name="Bradshaw-Cordum H."/>
            <person name="Ali J."/>
            <person name="Carter J."/>
            <person name="Cordes M."/>
            <person name="Harris A."/>
            <person name="Isak A."/>
            <person name="van Brunt A."/>
            <person name="Nguyen C."/>
            <person name="Du F."/>
            <person name="Courtney L."/>
            <person name="Kalicki J."/>
            <person name="Ozersky P."/>
            <person name="Abbott S."/>
            <person name="Armstrong J."/>
            <person name="Belter E.A."/>
            <person name="Caruso L."/>
            <person name="Cedroni M."/>
            <person name="Cotton M."/>
            <person name="Davidson T."/>
            <person name="Desai A."/>
            <person name="Elliott G."/>
            <person name="Erb T."/>
            <person name="Fronick C."/>
            <person name="Gaige T."/>
            <person name="Haakenson W."/>
            <person name="Haglund K."/>
            <person name="Holmes A."/>
            <person name="Harkins R."/>
            <person name="Kim K."/>
            <person name="Kruchowski S.S."/>
            <person name="Strong C.M."/>
            <person name="Grewal N."/>
            <person name="Goyea E."/>
            <person name="Hou S."/>
            <person name="Levy A."/>
            <person name="Martinka S."/>
            <person name="Mead K."/>
            <person name="McLellan M.D."/>
            <person name="Meyer R."/>
            <person name="Randall-Maher J."/>
            <person name="Tomlinson C."/>
            <person name="Dauphin-Kohlberg S."/>
            <person name="Kozlowicz-Reilly A."/>
            <person name="Shah N."/>
            <person name="Swearengen-Shahid S."/>
            <person name="Snider J."/>
            <person name="Strong J.T."/>
            <person name="Thompson J."/>
            <person name="Yoakum M."/>
            <person name="Leonard S."/>
            <person name="Pearman C."/>
            <person name="Trani L."/>
            <person name="Radionenko M."/>
            <person name="Waligorski J.E."/>
            <person name="Wang C."/>
            <person name="Rock S.M."/>
            <person name="Tin-Wollam A.-M."/>
            <person name="Maupin R."/>
            <person name="Latreille P."/>
            <person name="Wendl M.C."/>
            <person name="Yang S.-P."/>
            <person name="Pohl C."/>
            <person name="Wallis J.W."/>
            <person name="Spieth J."/>
            <person name="Bieri T.A."/>
            <person name="Berkowicz N."/>
            <person name="Nelson J.O."/>
            <person name="Osborne J."/>
            <person name="Ding L."/>
            <person name="Meyer R."/>
            <person name="Sabo A."/>
            <person name="Shotland Y."/>
            <person name="Sinha P."/>
            <person name="Wohldmann P.E."/>
            <person name="Cook L.L."/>
            <person name="Hickenbotham M.T."/>
            <person name="Eldred J."/>
            <person name="Williams D."/>
            <person name="Jones T.A."/>
            <person name="She X."/>
            <person name="Ciccarelli F.D."/>
            <person name="Izaurralde E."/>
            <person name="Taylor J."/>
            <person name="Schmutz J."/>
            <person name="Myers R.M."/>
            <person name="Cox D.R."/>
            <person name="Huang X."/>
            <person name="McPherson J.D."/>
            <person name="Mardis E.R."/>
            <person name="Clifton S.W."/>
            <person name="Warren W.C."/>
            <person name="Chinwalla A.T."/>
            <person name="Eddy S.R."/>
            <person name="Marra M.A."/>
            <person name="Ovcharenko I."/>
            <person name="Furey T.S."/>
            <person name="Miller W."/>
            <person name="Eichler E.E."/>
            <person name="Bork P."/>
            <person name="Suyama M."/>
            <person name="Torrents D."/>
            <person name="Waterston R.H."/>
            <person name="Wilson R.K."/>
        </authorList>
    </citation>
    <scope>NUCLEOTIDE SEQUENCE [LARGE SCALE GENOMIC DNA]</scope>
</reference>
<reference key="3">
    <citation type="journal article" date="2004" name="J. Cell Biol.">
        <title>Human Rif1 protein binds aberrant telomeres and aligns along anaphase midzone microtubules.</title>
        <authorList>
            <person name="Xu L."/>
            <person name="Blackburn E.H."/>
        </authorList>
    </citation>
    <scope>NUCLEOTIDE SEQUENCE [MRNA] (ISOFORMS 1 AND 2)</scope>
    <scope>SUBCELLULAR LOCATION</scope>
    <scope>TISSUE SPECIFICITY</scope>
    <scope>DEVELOPMENTAL STAGE</scope>
    <scope>VARIANTS SER-836; MET-1362; TYR-2021 AND VAL-2418</scope>
</reference>
<reference key="4">
    <citation type="submission" date="2004-03" db="EMBL/GenBank/DDBJ databases">
        <title>Identification and characterization of human Rif1.</title>
        <authorList>
            <person name="Simonsson T."/>
        </authorList>
    </citation>
    <scope>NUCLEOTIDE SEQUENCE [MRNA] (ISOFORM 1)</scope>
</reference>
<reference key="5">
    <citation type="journal article" date="2007" name="BMC Genomics">
        <title>The full-ORF clone resource of the German cDNA consortium.</title>
        <authorList>
            <person name="Bechtel S."/>
            <person name="Rosenfelder H."/>
            <person name="Duda A."/>
            <person name="Schmidt C.P."/>
            <person name="Ernst U."/>
            <person name="Wellenreuther R."/>
            <person name="Mehrle A."/>
            <person name="Schuster C."/>
            <person name="Bahr A."/>
            <person name="Bloecker H."/>
            <person name="Heubner D."/>
            <person name="Hoerlein A."/>
            <person name="Michel G."/>
            <person name="Wedler H."/>
            <person name="Koehrer K."/>
            <person name="Ottenwaelder B."/>
            <person name="Poustka A."/>
            <person name="Wiemann S."/>
            <person name="Schupp I."/>
        </authorList>
    </citation>
    <scope>NUCLEOTIDE SEQUENCE [LARGE SCALE MRNA] OF 35-853 AND 1728-2472 (ISOFORM 1)</scope>
    <scope>VARIANTS TYR-2021 AND VAL-2418</scope>
    <source>
        <tissue>Testis</tissue>
        <tissue>Testis carcinoma</tissue>
    </source>
</reference>
<reference key="6">
    <citation type="journal article" date="2004" name="Nat. Genet.">
        <title>Complete sequencing and characterization of 21,243 full-length human cDNAs.</title>
        <authorList>
            <person name="Ota T."/>
            <person name="Suzuki Y."/>
            <person name="Nishikawa T."/>
            <person name="Otsuki T."/>
            <person name="Sugiyama T."/>
            <person name="Irie R."/>
            <person name="Wakamatsu A."/>
            <person name="Hayashi K."/>
            <person name="Sato H."/>
            <person name="Nagai K."/>
            <person name="Kimura K."/>
            <person name="Makita H."/>
            <person name="Sekine M."/>
            <person name="Obayashi M."/>
            <person name="Nishi T."/>
            <person name="Shibahara T."/>
            <person name="Tanaka T."/>
            <person name="Ishii S."/>
            <person name="Yamamoto J."/>
            <person name="Saito K."/>
            <person name="Kawai Y."/>
            <person name="Isono Y."/>
            <person name="Nakamura Y."/>
            <person name="Nagahari K."/>
            <person name="Murakami K."/>
            <person name="Yasuda T."/>
            <person name="Iwayanagi T."/>
            <person name="Wagatsuma M."/>
            <person name="Shiratori A."/>
            <person name="Sudo H."/>
            <person name="Hosoiri T."/>
            <person name="Kaku Y."/>
            <person name="Kodaira H."/>
            <person name="Kondo H."/>
            <person name="Sugawara M."/>
            <person name="Takahashi M."/>
            <person name="Kanda K."/>
            <person name="Yokoi T."/>
            <person name="Furuya T."/>
            <person name="Kikkawa E."/>
            <person name="Omura Y."/>
            <person name="Abe K."/>
            <person name="Kamihara K."/>
            <person name="Katsuta N."/>
            <person name="Sato K."/>
            <person name="Tanikawa M."/>
            <person name="Yamazaki M."/>
            <person name="Ninomiya K."/>
            <person name="Ishibashi T."/>
            <person name="Yamashita H."/>
            <person name="Murakawa K."/>
            <person name="Fujimori K."/>
            <person name="Tanai H."/>
            <person name="Kimata M."/>
            <person name="Watanabe M."/>
            <person name="Hiraoka S."/>
            <person name="Chiba Y."/>
            <person name="Ishida S."/>
            <person name="Ono Y."/>
            <person name="Takiguchi S."/>
            <person name="Watanabe S."/>
            <person name="Yosida M."/>
            <person name="Hotuta T."/>
            <person name="Kusano J."/>
            <person name="Kanehori K."/>
            <person name="Takahashi-Fujii A."/>
            <person name="Hara H."/>
            <person name="Tanase T.-O."/>
            <person name="Nomura Y."/>
            <person name="Togiya S."/>
            <person name="Komai F."/>
            <person name="Hara R."/>
            <person name="Takeuchi K."/>
            <person name="Arita M."/>
            <person name="Imose N."/>
            <person name="Musashino K."/>
            <person name="Yuuki H."/>
            <person name="Oshima A."/>
            <person name="Sasaki N."/>
            <person name="Aotsuka S."/>
            <person name="Yoshikawa Y."/>
            <person name="Matsunawa H."/>
            <person name="Ichihara T."/>
            <person name="Shiohata N."/>
            <person name="Sano S."/>
            <person name="Moriya S."/>
            <person name="Momiyama H."/>
            <person name="Satoh N."/>
            <person name="Takami S."/>
            <person name="Terashima Y."/>
            <person name="Suzuki O."/>
            <person name="Nakagawa S."/>
            <person name="Senoh A."/>
            <person name="Mizoguchi H."/>
            <person name="Goto Y."/>
            <person name="Shimizu F."/>
            <person name="Wakebe H."/>
            <person name="Hishigaki H."/>
            <person name="Watanabe T."/>
            <person name="Sugiyama A."/>
            <person name="Takemoto M."/>
            <person name="Kawakami B."/>
            <person name="Yamazaki M."/>
            <person name="Watanabe K."/>
            <person name="Kumagai A."/>
            <person name="Itakura S."/>
            <person name="Fukuzumi Y."/>
            <person name="Fujimori Y."/>
            <person name="Komiyama M."/>
            <person name="Tashiro H."/>
            <person name="Tanigami A."/>
            <person name="Fujiwara T."/>
            <person name="Ono T."/>
            <person name="Yamada K."/>
            <person name="Fujii Y."/>
            <person name="Ozaki K."/>
            <person name="Hirao M."/>
            <person name="Ohmori Y."/>
            <person name="Kawabata A."/>
            <person name="Hikiji T."/>
            <person name="Kobatake N."/>
            <person name="Inagaki H."/>
            <person name="Ikema Y."/>
            <person name="Okamoto S."/>
            <person name="Okitani R."/>
            <person name="Kawakami T."/>
            <person name="Noguchi S."/>
            <person name="Itoh T."/>
            <person name="Shigeta K."/>
            <person name="Senba T."/>
            <person name="Matsumura K."/>
            <person name="Nakajima Y."/>
            <person name="Mizuno T."/>
            <person name="Morinaga M."/>
            <person name="Sasaki M."/>
            <person name="Togashi T."/>
            <person name="Oyama M."/>
            <person name="Hata H."/>
            <person name="Watanabe M."/>
            <person name="Komatsu T."/>
            <person name="Mizushima-Sugano J."/>
            <person name="Satoh T."/>
            <person name="Shirai Y."/>
            <person name="Takahashi Y."/>
            <person name="Nakagawa K."/>
            <person name="Okumura K."/>
            <person name="Nagase T."/>
            <person name="Nomura N."/>
            <person name="Kikuchi H."/>
            <person name="Masuho Y."/>
            <person name="Yamashita R."/>
            <person name="Nakai K."/>
            <person name="Yada T."/>
            <person name="Nakamura Y."/>
            <person name="Ohara O."/>
            <person name="Isogai T."/>
            <person name="Sugano S."/>
        </authorList>
    </citation>
    <scope>NUCLEOTIDE SEQUENCE [LARGE SCALE MRNA] OF 161-1499 AND 2217-2472 (ISOFORM 1)</scope>
    <scope>VARIANTS SER-836; MET-1362 AND VAL-2418</scope>
</reference>
<reference key="7">
    <citation type="journal article" date="1997" name="Genome Res.">
        <title>Large-scale concatenation cDNA sequencing.</title>
        <authorList>
            <person name="Yu W."/>
            <person name="Andersson B."/>
            <person name="Worley K.C."/>
            <person name="Muzny D.M."/>
            <person name="Ding Y."/>
            <person name="Liu W."/>
            <person name="Ricafrente J.Y."/>
            <person name="Wentland M.A."/>
            <person name="Lennon G."/>
            <person name="Gibbs R.A."/>
        </authorList>
    </citation>
    <scope>NUCLEOTIDE SEQUENCE [LARGE SCALE MRNA] OF 2108-2472 (ISOFORM 2)</scope>
    <scope>VARIANT VAL-2418</scope>
    <source>
        <tissue>Brain</tissue>
    </source>
</reference>
<reference key="8">
    <citation type="journal article" date="2006" name="Cell">
        <title>Global, in vivo, and site-specific phosphorylation dynamics in signaling networks.</title>
        <authorList>
            <person name="Olsen J.V."/>
            <person name="Blagoev B."/>
            <person name="Gnad F."/>
            <person name="Macek B."/>
            <person name="Kumar C."/>
            <person name="Mortensen P."/>
            <person name="Mann M."/>
        </authorList>
    </citation>
    <scope>PHOSPHORYLATION [LARGE SCALE ANALYSIS] AT SER-1454 AND SER-1688</scope>
    <scope>IDENTIFICATION BY MASS SPECTROMETRY [LARGE SCALE ANALYSIS]</scope>
    <source>
        <tissue>Cervix carcinoma</tissue>
    </source>
</reference>
<reference key="9">
    <citation type="journal article" date="2006" name="Nat. Biotechnol.">
        <title>A probability-based approach for high-throughput protein phosphorylation analysis and site localization.</title>
        <authorList>
            <person name="Beausoleil S.A."/>
            <person name="Villen J."/>
            <person name="Gerber S.A."/>
            <person name="Rush J."/>
            <person name="Gygi S.P."/>
        </authorList>
    </citation>
    <scope>PHOSPHORYLATION [LARGE SCALE ANALYSIS] AT THR-409 AND SER-1579</scope>
    <scope>IDENTIFICATION BY MASS SPECTROMETRY [LARGE SCALE ANALYSIS]</scope>
    <source>
        <tissue>Cervix carcinoma</tissue>
    </source>
</reference>
<reference key="10">
    <citation type="journal article" date="2007" name="Science">
        <title>ATM and ATR substrate analysis reveals extensive protein networks responsive to DNA damage.</title>
        <authorList>
            <person name="Matsuoka S."/>
            <person name="Ballif B.A."/>
            <person name="Smogorzewska A."/>
            <person name="McDonald E.R. III"/>
            <person name="Hurov K.E."/>
            <person name="Luo J."/>
            <person name="Bakalarski C.E."/>
            <person name="Zhao Z."/>
            <person name="Solimini N."/>
            <person name="Lerenthal Y."/>
            <person name="Shiloh Y."/>
            <person name="Gygi S.P."/>
            <person name="Elledge S.J."/>
        </authorList>
    </citation>
    <scope>PHOSPHORYLATION [LARGE SCALE ANALYSIS] AT SER-1513; THR-1518 AND SER-1542</scope>
    <scope>IDENTIFICATION BY MASS SPECTROMETRY [LARGE SCALE ANALYSIS]</scope>
    <source>
        <tissue>Embryonic kidney</tissue>
    </source>
</reference>
<reference key="11">
    <citation type="journal article" date="2008" name="Proc. Natl. Acad. Sci. U.S.A.">
        <title>A quantitative atlas of mitotic phosphorylation.</title>
        <authorList>
            <person name="Dephoure N."/>
            <person name="Zhou C."/>
            <person name="Villen J."/>
            <person name="Beausoleil S.A."/>
            <person name="Bakalarski C.E."/>
            <person name="Elledge S.J."/>
            <person name="Gygi S.P."/>
        </authorList>
    </citation>
    <scope>PHOSPHORYLATION [LARGE SCALE ANALYSIS] AT SER-402; THR-409; SER-1162; SER-1236; SER-1238; SER-1422; SER-1554; SER-1616; SER-1688; SER-1693; SER-1810; SER-2144; SER-2172; SER-2196; SER-2205; SER-2260; SER-2339; SER-2391; SER-2393; SER-2465 AND SER-2471</scope>
    <scope>IDENTIFICATION BY MASS SPECTROMETRY [LARGE SCALE ANALYSIS]</scope>
    <source>
        <tissue>Cervix carcinoma</tissue>
    </source>
</reference>
<reference key="12">
    <citation type="journal article" date="2009" name="Anal. Chem.">
        <title>Lys-N and trypsin cover complementary parts of the phosphoproteome in a refined SCX-based approach.</title>
        <authorList>
            <person name="Gauci S."/>
            <person name="Helbig A.O."/>
            <person name="Slijper M."/>
            <person name="Krijgsveld J."/>
            <person name="Heck A.J."/>
            <person name="Mohammed S."/>
        </authorList>
    </citation>
    <scope>IDENTIFICATION BY MASS SPECTROMETRY [LARGE SCALE ANALYSIS]</scope>
</reference>
<reference key="13">
    <citation type="journal article" date="2009" name="Sci. Signal.">
        <title>Quantitative phosphoproteomic analysis of T cell receptor signaling reveals system-wide modulation of protein-protein interactions.</title>
        <authorList>
            <person name="Mayya V."/>
            <person name="Lundgren D.H."/>
            <person name="Hwang S.-I."/>
            <person name="Rezaul K."/>
            <person name="Wu L."/>
            <person name="Eng J.K."/>
            <person name="Rodionov V."/>
            <person name="Han D.K."/>
        </authorList>
    </citation>
    <scope>PHOSPHORYLATION [LARGE SCALE ANALYSIS] AT SER-979; THR-1047; SER-1552; SER-1554; SER-1579; SER-1688; THR-1806; SER-1971 AND SER-2196</scope>
    <scope>IDENTIFICATION BY MASS SPECTROMETRY [LARGE SCALE ANALYSIS]</scope>
    <source>
        <tissue>Leukemic T-cell</tissue>
    </source>
</reference>
<reference key="14">
    <citation type="journal article" date="2010" name="Sci. Signal.">
        <title>Quantitative phosphoproteomics reveals widespread full phosphorylation site occupancy during mitosis.</title>
        <authorList>
            <person name="Olsen J.V."/>
            <person name="Vermeulen M."/>
            <person name="Santamaria A."/>
            <person name="Kumar C."/>
            <person name="Miller M.L."/>
            <person name="Jensen L.J."/>
            <person name="Gnad F."/>
            <person name="Cox J."/>
            <person name="Jensen T.S."/>
            <person name="Nigg E.A."/>
            <person name="Brunak S."/>
            <person name="Mann M."/>
        </authorList>
    </citation>
    <scope>PHOSPHORYLATION [LARGE SCALE ANALYSIS] AT SER-1238; SER-1454; SER-1579; SER-1688; SER-1810; SER-1873; SER-1876; SER-2161; SER-2172; SER-2176; SER-2196; SER-2205 AND SER-2393</scope>
    <scope>IDENTIFICATION BY MASS SPECTROMETRY [LARGE SCALE ANALYSIS]</scope>
    <source>
        <tissue>Cervix carcinoma</tissue>
    </source>
</reference>
<reference key="15">
    <citation type="journal article" date="2011" name="BMC Syst. Biol.">
        <title>Initial characterization of the human central proteome.</title>
        <authorList>
            <person name="Burkard T.R."/>
            <person name="Planyavsky M."/>
            <person name="Kaupe I."/>
            <person name="Breitwieser F.P."/>
            <person name="Buerckstuemmer T."/>
            <person name="Bennett K.L."/>
            <person name="Superti-Furga G."/>
            <person name="Colinge J."/>
        </authorList>
    </citation>
    <scope>IDENTIFICATION BY MASS SPECTROMETRY [LARGE SCALE ANALYSIS]</scope>
</reference>
<reference key="16">
    <citation type="journal article" date="2011" name="Sci. Signal.">
        <title>System-wide temporal characterization of the proteome and phosphoproteome of human embryonic stem cell differentiation.</title>
        <authorList>
            <person name="Rigbolt K.T."/>
            <person name="Prokhorova T.A."/>
            <person name="Akimov V."/>
            <person name="Henningsen J."/>
            <person name="Johansen P.T."/>
            <person name="Kratchmarova I."/>
            <person name="Kassem M."/>
            <person name="Mann M."/>
            <person name="Olsen J.V."/>
            <person name="Blagoev B."/>
        </authorList>
    </citation>
    <scope>PHOSPHORYLATION [LARGE SCALE ANALYSIS] AT SER-782; SER-1422; SER-1454; SER-1542; SER-1554; SER-1576; SER-1579; SER-1688; SER-1873; SER-2144; SER-2161; THR-2167 AND SER-2393</scope>
    <scope>IDENTIFICATION BY MASS SPECTROMETRY [LARGE SCALE ANALYSIS]</scope>
</reference>
<reference key="17">
    <citation type="journal article" date="2012" name="Proc. Natl. Acad. Sci. U.S.A.">
        <title>N-terminal acetylome analyses and functional insights of the N-terminal acetyltransferase NatB.</title>
        <authorList>
            <person name="Van Damme P."/>
            <person name="Lasa M."/>
            <person name="Polevoda B."/>
            <person name="Gazquez C."/>
            <person name="Elosegui-Artola A."/>
            <person name="Kim D.S."/>
            <person name="De Juan-Pardo E."/>
            <person name="Demeyer K."/>
            <person name="Hole K."/>
            <person name="Larrea E."/>
            <person name="Timmerman E."/>
            <person name="Prieto J."/>
            <person name="Arnesen T."/>
            <person name="Sherman F."/>
            <person name="Gevaert K."/>
            <person name="Aldabe R."/>
        </authorList>
    </citation>
    <scope>IDENTIFICATION BY MASS SPECTROMETRY [LARGE SCALE ANALYSIS]</scope>
</reference>
<reference key="18">
    <citation type="journal article" date="2013" name="J. Proteome Res.">
        <title>Toward a comprehensive characterization of a human cancer cell phosphoproteome.</title>
        <authorList>
            <person name="Zhou H."/>
            <person name="Di Palma S."/>
            <person name="Preisinger C."/>
            <person name="Peng M."/>
            <person name="Polat A.N."/>
            <person name="Heck A.J."/>
            <person name="Mohammed S."/>
        </authorList>
    </citation>
    <scope>PHOSPHORYLATION [LARGE SCALE ANALYSIS] AT SER-402; SER-782; SER-1008; SER-1162; THR-1220; SER-1236; SER-1238; SER-1422; SER-1454; SER-1513; SER-1542; SER-1552; SER-1554; SER-1556; SER-1579; SER-1613; SER-1616; SER-1688; SER-1706; SER-1709; THR-1806; SER-1810; SER-1926; SER-2144; SER-2161; SER-2172; SER-2176; SER-2196; SER-2205 AND SER-2339</scope>
    <scope>IDENTIFICATION BY MASS SPECTROMETRY [LARGE SCALE ANALYSIS]</scope>
    <source>
        <tissue>Cervix carcinoma</tissue>
        <tissue>Erythroleukemia</tissue>
    </source>
</reference>
<reference key="19">
    <citation type="journal article" date="2013" name="Mol. Cell">
        <title>A cell cycle-dependent regulatory circuit composed of 53BP1-RIF1 and BRCA1-CtIP controls DNA repair pathway choice.</title>
        <authorList>
            <person name="Escribano-Diaz C."/>
            <person name="Orthwein A."/>
            <person name="Fradet-Turcotte A."/>
            <person name="Xing M."/>
            <person name="Young J.T."/>
            <person name="Tkac J."/>
            <person name="Cook M.A."/>
            <person name="Rosebrock A.P."/>
            <person name="Munro M."/>
            <person name="Canny M.D."/>
            <person name="Xu D."/>
            <person name="Durocher D."/>
        </authorList>
    </citation>
    <scope>FUNCTION</scope>
    <scope>INTERACTION WITH TP53BP1</scope>
</reference>
<reference key="20">
    <citation type="journal article" date="2014" name="J. Proteomics">
        <title>An enzyme assisted RP-RPLC approach for in-depth analysis of human liver phosphoproteome.</title>
        <authorList>
            <person name="Bian Y."/>
            <person name="Song C."/>
            <person name="Cheng K."/>
            <person name="Dong M."/>
            <person name="Wang F."/>
            <person name="Huang J."/>
            <person name="Sun D."/>
            <person name="Wang L."/>
            <person name="Ye M."/>
            <person name="Zou H."/>
        </authorList>
    </citation>
    <scope>IDENTIFICATION BY MASS SPECTROMETRY [LARGE SCALE ANALYSIS]</scope>
    <source>
        <tissue>Liver</tissue>
    </source>
</reference>
<reference key="21">
    <citation type="journal article" date="2017" name="Nat. Commun.">
        <title>ATM and CDK2 control chromatin remodeler CSB to inhibit RIF1 in DSB repair pathway choice.</title>
        <authorList>
            <person name="Batenburg N.L."/>
            <person name="Walker J.R."/>
            <person name="Noordermeer S.M."/>
            <person name="Moatti N."/>
            <person name="Durocher D."/>
            <person name="Zhu X.D."/>
        </authorList>
    </citation>
    <scope>INTERACTION WITH ERCC6</scope>
</reference>
<reference key="22">
    <citation type="journal article" date="2017" name="Nature">
        <title>TIRR regulates 53BP1 by masking its histone methyl-lysine binding function.</title>
        <authorList>
            <person name="Drane P."/>
            <person name="Brault M.E."/>
            <person name="Cui G."/>
            <person name="Meghani K."/>
            <person name="Chaubey S."/>
            <person name="Detappe A."/>
            <person name="Parnandi N."/>
            <person name="He Y."/>
            <person name="Zheng X.F."/>
            <person name="Botuyan M.V."/>
            <person name="Kalousi A."/>
            <person name="Yewdell W.T."/>
            <person name="Muench C."/>
            <person name="Harper J.W."/>
            <person name="Chaudhuri J."/>
            <person name="Soutoglou E."/>
            <person name="Mer G."/>
            <person name="Chowdhury D."/>
        </authorList>
    </citation>
    <scope>FUNCTION</scope>
    <scope>INTERACTION WITH TP53BP1</scope>
</reference>
<reference key="23">
    <citation type="journal article" date="2018" name="EMBO J.">
        <title>FAM35A associates with REV7 and modulates DNA damage responses of normal and BRCA1-defective cells.</title>
        <authorList>
            <person name="Tomida J."/>
            <person name="Takata K.I."/>
            <person name="Bhetawal S."/>
            <person name="Person M.D."/>
            <person name="Chao H.P."/>
            <person name="Tang D.G."/>
            <person name="Wood R.D."/>
        </authorList>
    </citation>
    <scope>INTERACTION WITH SHLD2</scope>
    <scope>IDENTIFICATION BY MASS SPECTROMETRY</scope>
</reference>
<reference key="24">
    <citation type="journal article" date="2021" name="Nat. Cell Biol.">
        <title>ASTE1 promotes shieldin-complex-mediated DNA repair by attenuating end resection.</title>
        <authorList>
            <person name="Zhao F."/>
            <person name="Kim W."/>
            <person name="Gao H."/>
            <person name="Liu C."/>
            <person name="Zhang Y."/>
            <person name="Chen Y."/>
            <person name="Deng M."/>
            <person name="Zhou Q."/>
            <person name="Huang J."/>
            <person name="Hu Q."/>
            <person name="Chen S.H."/>
            <person name="Nowsheen S."/>
            <person name="Kloeber J.A."/>
            <person name="Qin B."/>
            <person name="Yin P."/>
            <person name="Tu X."/>
            <person name="Guo G."/>
            <person name="Qin S."/>
            <person name="Zhang C."/>
            <person name="Gao M."/>
            <person name="Luo K."/>
            <person name="Liu Y."/>
            <person name="Lou Z."/>
            <person name="Yuan J."/>
        </authorList>
    </citation>
    <scope>INTERACTION WITH ASTE1</scope>
</reference>
<reference key="25">
    <citation type="journal article" date="2006" name="Science">
        <title>The consensus coding sequences of human breast and colorectal cancers.</title>
        <authorList>
            <person name="Sjoeblom T."/>
            <person name="Jones S."/>
            <person name="Wood L.D."/>
            <person name="Parsons D.W."/>
            <person name="Lin J."/>
            <person name="Barber T.D."/>
            <person name="Mandelker D."/>
            <person name="Leary R.J."/>
            <person name="Ptak J."/>
            <person name="Silliman N."/>
            <person name="Szabo S."/>
            <person name="Buckhaults P."/>
            <person name="Farrell C."/>
            <person name="Meeh P."/>
            <person name="Markowitz S.D."/>
            <person name="Willis J."/>
            <person name="Dawson D."/>
            <person name="Willson J.K.V."/>
            <person name="Gazdar A.F."/>
            <person name="Hartigan J."/>
            <person name="Wu L."/>
            <person name="Liu C."/>
            <person name="Parmigiani G."/>
            <person name="Park B.H."/>
            <person name="Bachman K.E."/>
            <person name="Papadopoulos N."/>
            <person name="Vogelstein B."/>
            <person name="Kinzler K.W."/>
            <person name="Velculescu V.E."/>
        </authorList>
    </citation>
    <scope>VARIANTS [LARGE SCALE ANALYSIS] LYS-1784 AND HIS-1955</scope>
</reference>
<protein>
    <recommendedName>
        <fullName evidence="17">Telomere-associated protein RIF1</fullName>
    </recommendedName>
    <alternativeName>
        <fullName evidence="18">Rap1-interacting factor 1 homolog</fullName>
    </alternativeName>
</protein>
<accession>Q5UIP0</accession>
<accession>A6NC27</accession>
<accession>C9JBR1</accession>
<accession>Q5H9R3</accession>
<accession>Q5UIP2</accession>
<accession>Q66YK6</accession>
<accession>Q6PRU2</accession>
<accession>Q8TE94</accession>
<accession>Q99772</accession>
<accession>Q9H830</accession>
<accession>Q9H9B9</accession>
<accession>Q9NVP5</accession>
<accession>Q9Y4R4</accession>
<dbReference type="EMBL" id="AY585745">
    <property type="protein sequence ID" value="AAT40745.1"/>
    <property type="molecule type" value="mRNA"/>
</dbReference>
<dbReference type="EMBL" id="AY727910">
    <property type="protein sequence ID" value="AAV51401.1"/>
    <property type="molecule type" value="mRNA"/>
</dbReference>
<dbReference type="EMBL" id="AY727911">
    <property type="protein sequence ID" value="AAV51402.1"/>
    <property type="molecule type" value="mRNA"/>
</dbReference>
<dbReference type="EMBL" id="AY727912">
    <property type="protein sequence ID" value="AAV51403.1"/>
    <property type="molecule type" value="mRNA"/>
</dbReference>
<dbReference type="EMBL" id="AY727913">
    <property type="protein sequence ID" value="AAV51404.1"/>
    <property type="molecule type" value="mRNA"/>
</dbReference>
<dbReference type="EMBL" id="AY584066">
    <property type="protein sequence ID" value="AAS94233.1"/>
    <property type="molecule type" value="mRNA"/>
</dbReference>
<dbReference type="EMBL" id="AC009311">
    <property type="status" value="NOT_ANNOTATED_CDS"/>
    <property type="molecule type" value="Genomic_DNA"/>
</dbReference>
<dbReference type="EMBL" id="AC009497">
    <property type="status" value="NOT_ANNOTATED_CDS"/>
    <property type="molecule type" value="Genomic_DNA"/>
</dbReference>
<dbReference type="EMBL" id="AL080129">
    <property type="protein sequence ID" value="CAB45727.1"/>
    <property type="molecule type" value="mRNA"/>
</dbReference>
<dbReference type="EMBL" id="CR933663">
    <property type="protein sequence ID" value="CAI45961.1"/>
    <property type="status" value="ALT_SEQ"/>
    <property type="molecule type" value="mRNA"/>
</dbReference>
<dbReference type="EMBL" id="AK001461">
    <property type="protein sequence ID" value="BAA91705.1"/>
    <property type="status" value="ALT_INIT"/>
    <property type="molecule type" value="mRNA"/>
</dbReference>
<dbReference type="EMBL" id="AK022932">
    <property type="protein sequence ID" value="BAB14313.1"/>
    <property type="status" value="ALT_INIT"/>
    <property type="molecule type" value="mRNA"/>
</dbReference>
<dbReference type="EMBL" id="AK024033">
    <property type="protein sequence ID" value="BAB14792.1"/>
    <property type="status" value="ALT_INIT"/>
    <property type="molecule type" value="mRNA"/>
</dbReference>
<dbReference type="EMBL" id="AK074349">
    <property type="protein sequence ID" value="BAB85058.1"/>
    <property type="status" value="ALT_INIT"/>
    <property type="molecule type" value="mRNA"/>
</dbReference>
<dbReference type="EMBL" id="U79263">
    <property type="protein sequence ID" value="AAB50209.1"/>
    <property type="molecule type" value="mRNA"/>
</dbReference>
<dbReference type="CCDS" id="CCDS2194.1">
    <molecule id="Q5UIP0-1"/>
</dbReference>
<dbReference type="CCDS" id="CCDS54406.1">
    <molecule id="Q5UIP0-2"/>
</dbReference>
<dbReference type="PIR" id="T12518">
    <property type="entry name" value="T12518"/>
</dbReference>
<dbReference type="RefSeq" id="NP_001171134.1">
    <molecule id="Q5UIP0-2"/>
    <property type="nucleotide sequence ID" value="NM_001177663.2"/>
</dbReference>
<dbReference type="RefSeq" id="NP_001171135.1">
    <molecule id="Q5UIP0-2"/>
    <property type="nucleotide sequence ID" value="NM_001177664.2"/>
</dbReference>
<dbReference type="RefSeq" id="NP_001171136.1">
    <molecule id="Q5UIP0-2"/>
    <property type="nucleotide sequence ID" value="NM_001177665.2"/>
</dbReference>
<dbReference type="RefSeq" id="NP_060621.3">
    <molecule id="Q5UIP0-1"/>
    <property type="nucleotide sequence ID" value="NM_018151.4"/>
</dbReference>
<dbReference type="RefSeq" id="XP_005246722.1">
    <molecule id="Q5UIP0-1"/>
    <property type="nucleotide sequence ID" value="XM_005246665.4"/>
</dbReference>
<dbReference type="SMR" id="Q5UIP0"/>
<dbReference type="BioGRID" id="120482">
    <property type="interactions" value="219"/>
</dbReference>
<dbReference type="CORUM" id="Q5UIP0"/>
<dbReference type="FunCoup" id="Q5UIP0">
    <property type="interactions" value="3367"/>
</dbReference>
<dbReference type="IntAct" id="Q5UIP0">
    <property type="interactions" value="197"/>
</dbReference>
<dbReference type="MINT" id="Q5UIP0"/>
<dbReference type="STRING" id="9606.ENSP00000243326"/>
<dbReference type="GlyConnect" id="1791">
    <property type="glycosylation" value="3 N-Linked glycans (1 site)"/>
</dbReference>
<dbReference type="GlyCosmos" id="Q5UIP0">
    <property type="glycosylation" value="1 site, 3 glycans"/>
</dbReference>
<dbReference type="GlyGen" id="Q5UIP0">
    <property type="glycosylation" value="11 sites, 28 N-linked glycans (5 sites), 1 O-linked glycan (5 sites)"/>
</dbReference>
<dbReference type="iPTMnet" id="Q5UIP0"/>
<dbReference type="MetOSite" id="Q5UIP0"/>
<dbReference type="PhosphoSitePlus" id="Q5UIP0"/>
<dbReference type="SwissPalm" id="Q5UIP0"/>
<dbReference type="BioMuta" id="RIF1"/>
<dbReference type="DMDM" id="68565701"/>
<dbReference type="CPTAC" id="CPTAC-3254"/>
<dbReference type="CPTAC" id="CPTAC-5981"/>
<dbReference type="jPOST" id="Q5UIP0"/>
<dbReference type="MassIVE" id="Q5UIP0"/>
<dbReference type="PaxDb" id="9606-ENSP00000243326"/>
<dbReference type="PeptideAtlas" id="Q5UIP0"/>
<dbReference type="ProteomicsDB" id="65248">
    <molecule id="Q5UIP0-1"/>
</dbReference>
<dbReference type="ProteomicsDB" id="65249">
    <molecule id="Q5UIP0-2"/>
</dbReference>
<dbReference type="Pumba" id="Q5UIP0"/>
<dbReference type="Antibodypedia" id="33653">
    <property type="antibodies" value="135 antibodies from 28 providers"/>
</dbReference>
<dbReference type="DNASU" id="55183"/>
<dbReference type="Ensembl" id="ENST00000243326.9">
    <molecule id="Q5UIP0-1"/>
    <property type="protein sequence ID" value="ENSP00000243326.4"/>
    <property type="gene ID" value="ENSG00000080345.18"/>
</dbReference>
<dbReference type="Ensembl" id="ENST00000428287.6">
    <molecule id="Q5UIP0-2"/>
    <property type="protein sequence ID" value="ENSP00000415691.2"/>
    <property type="gene ID" value="ENSG00000080345.18"/>
</dbReference>
<dbReference type="Ensembl" id="ENST00000430328.6">
    <molecule id="Q5UIP0-2"/>
    <property type="protein sequence ID" value="ENSP00000416123.2"/>
    <property type="gene ID" value="ENSG00000080345.18"/>
</dbReference>
<dbReference type="Ensembl" id="ENST00000444746.7">
    <molecule id="Q5UIP0-1"/>
    <property type="protein sequence ID" value="ENSP00000390181.2"/>
    <property type="gene ID" value="ENSG00000080345.18"/>
</dbReference>
<dbReference type="Ensembl" id="ENST00000453091.6">
    <molecule id="Q5UIP0-2"/>
    <property type="protein sequence ID" value="ENSP00000414615.2"/>
    <property type="gene ID" value="ENSG00000080345.18"/>
</dbReference>
<dbReference type="GeneID" id="55183"/>
<dbReference type="KEGG" id="hsa:55183"/>
<dbReference type="MANE-Select" id="ENST00000444746.7">
    <property type="protein sequence ID" value="ENSP00000390181.2"/>
    <property type="RefSeq nucleotide sequence ID" value="NM_018151.5"/>
    <property type="RefSeq protein sequence ID" value="NP_060621.3"/>
</dbReference>
<dbReference type="UCSC" id="uc002txl.4">
    <molecule id="Q5UIP0-1"/>
    <property type="organism name" value="human"/>
</dbReference>
<dbReference type="AGR" id="HGNC:23207"/>
<dbReference type="CTD" id="55183"/>
<dbReference type="DisGeNET" id="55183"/>
<dbReference type="GeneCards" id="RIF1"/>
<dbReference type="HGNC" id="HGNC:23207">
    <property type="gene designation" value="RIF1"/>
</dbReference>
<dbReference type="HPA" id="ENSG00000080345">
    <property type="expression patterns" value="Low tissue specificity"/>
</dbReference>
<dbReference type="MalaCards" id="RIF1"/>
<dbReference type="MIM" id="608952">
    <property type="type" value="gene"/>
</dbReference>
<dbReference type="neXtProt" id="NX_Q5UIP0"/>
<dbReference type="OpenTargets" id="ENSG00000080345"/>
<dbReference type="PharmGKB" id="PA134933858"/>
<dbReference type="VEuPathDB" id="HostDB:ENSG00000080345"/>
<dbReference type="eggNOG" id="ENOG502QV6C">
    <property type="taxonomic scope" value="Eukaryota"/>
</dbReference>
<dbReference type="GeneTree" id="ENSGT00390000012204"/>
<dbReference type="HOGENOM" id="CLU_000989_0_0_1"/>
<dbReference type="InParanoid" id="Q5UIP0"/>
<dbReference type="OMA" id="NMRSTDY"/>
<dbReference type="OrthoDB" id="5399929at2759"/>
<dbReference type="PAN-GO" id="Q5UIP0">
    <property type="GO annotations" value="2 GO annotations based on evolutionary models"/>
</dbReference>
<dbReference type="PhylomeDB" id="Q5UIP0"/>
<dbReference type="TreeFam" id="TF323789"/>
<dbReference type="PathwayCommons" id="Q5UIP0"/>
<dbReference type="Reactome" id="R-HSA-5693571">
    <property type="pathway name" value="Nonhomologous End-Joining (NHEJ)"/>
</dbReference>
<dbReference type="SignaLink" id="Q5UIP0"/>
<dbReference type="SIGNOR" id="Q5UIP0"/>
<dbReference type="BioGRID-ORCS" id="55183">
    <property type="hits" value="213 hits in 1158 CRISPR screens"/>
</dbReference>
<dbReference type="CD-CODE" id="91857CE7">
    <property type="entry name" value="Nucleolus"/>
</dbReference>
<dbReference type="ChiTaRS" id="RIF1">
    <property type="organism name" value="human"/>
</dbReference>
<dbReference type="GeneWiki" id="RIF1"/>
<dbReference type="GenomeRNAi" id="55183"/>
<dbReference type="Pharos" id="Q5UIP0">
    <property type="development level" value="Tbio"/>
</dbReference>
<dbReference type="PRO" id="PR:Q5UIP0"/>
<dbReference type="Proteomes" id="UP000005640">
    <property type="component" value="Chromosome 2"/>
</dbReference>
<dbReference type="RNAct" id="Q5UIP0">
    <property type="molecule type" value="protein"/>
</dbReference>
<dbReference type="Bgee" id="ENSG00000080345">
    <property type="expression patterns" value="Expressed in buccal mucosa cell and 201 other cell types or tissues"/>
</dbReference>
<dbReference type="ExpressionAtlas" id="Q5UIP0">
    <property type="expression patterns" value="baseline and differential"/>
</dbReference>
<dbReference type="GO" id="GO:0000785">
    <property type="term" value="C:chromatin"/>
    <property type="evidence" value="ECO:0000250"/>
    <property type="project" value="BHF-UCL"/>
</dbReference>
<dbReference type="GO" id="GO:0140445">
    <property type="term" value="C:chromosome, telomeric repeat region"/>
    <property type="evidence" value="ECO:0000250"/>
    <property type="project" value="BHF-UCL"/>
</dbReference>
<dbReference type="GO" id="GO:0000793">
    <property type="term" value="C:condensed chromosome"/>
    <property type="evidence" value="ECO:0000314"/>
    <property type="project" value="BHF-UCL"/>
</dbReference>
<dbReference type="GO" id="GO:0005737">
    <property type="term" value="C:cytoplasm"/>
    <property type="evidence" value="ECO:0007669"/>
    <property type="project" value="UniProtKB-KW"/>
</dbReference>
<dbReference type="GO" id="GO:0001939">
    <property type="term" value="C:female pronucleus"/>
    <property type="evidence" value="ECO:0007669"/>
    <property type="project" value="Ensembl"/>
</dbReference>
<dbReference type="GO" id="GO:0001940">
    <property type="term" value="C:male pronucleus"/>
    <property type="evidence" value="ECO:0007669"/>
    <property type="project" value="Ensembl"/>
</dbReference>
<dbReference type="GO" id="GO:0031965">
    <property type="term" value="C:nuclear membrane"/>
    <property type="evidence" value="ECO:0000314"/>
    <property type="project" value="HPA"/>
</dbReference>
<dbReference type="GO" id="GO:0005654">
    <property type="term" value="C:nucleoplasm"/>
    <property type="evidence" value="ECO:0000314"/>
    <property type="project" value="HPA"/>
</dbReference>
<dbReference type="GO" id="GO:0005634">
    <property type="term" value="C:nucleus"/>
    <property type="evidence" value="ECO:0000318"/>
    <property type="project" value="GO_Central"/>
</dbReference>
<dbReference type="GO" id="GO:0005886">
    <property type="term" value="C:plasma membrane"/>
    <property type="evidence" value="ECO:0000314"/>
    <property type="project" value="HPA"/>
</dbReference>
<dbReference type="GO" id="GO:0035861">
    <property type="term" value="C:site of double-strand break"/>
    <property type="evidence" value="ECO:0000314"/>
    <property type="project" value="UniProtKB"/>
</dbReference>
<dbReference type="GO" id="GO:0051233">
    <property type="term" value="C:spindle midzone"/>
    <property type="evidence" value="ECO:0000314"/>
    <property type="project" value="BHF-UCL"/>
</dbReference>
<dbReference type="GO" id="GO:1990830">
    <property type="term" value="P:cellular response to leukemia inhibitory factor"/>
    <property type="evidence" value="ECO:0007669"/>
    <property type="project" value="Ensembl"/>
</dbReference>
<dbReference type="GO" id="GO:0006974">
    <property type="term" value="P:DNA damage response"/>
    <property type="evidence" value="ECO:0000314"/>
    <property type="project" value="UniProtKB"/>
</dbReference>
<dbReference type="GO" id="GO:0006281">
    <property type="term" value="P:DNA repair"/>
    <property type="evidence" value="ECO:0007669"/>
    <property type="project" value="UniProtKB-KW"/>
</dbReference>
<dbReference type="GO" id="GO:2000042">
    <property type="term" value="P:negative regulation of double-strand break repair via homologous recombination"/>
    <property type="evidence" value="ECO:0000314"/>
    <property type="project" value="UniProtKB"/>
</dbReference>
<dbReference type="GO" id="GO:0045814">
    <property type="term" value="P:negative regulation of gene expression, epigenetic"/>
    <property type="evidence" value="ECO:0000250"/>
    <property type="project" value="BHF-UCL"/>
</dbReference>
<dbReference type="GO" id="GO:0000122">
    <property type="term" value="P:negative regulation of transcription by RNA polymerase II"/>
    <property type="evidence" value="ECO:0000250"/>
    <property type="project" value="BHF-UCL"/>
</dbReference>
<dbReference type="GO" id="GO:2001034">
    <property type="term" value="P:positive regulation of double-strand break repair via nonhomologous end joining"/>
    <property type="evidence" value="ECO:0000314"/>
    <property type="project" value="UniProtKB"/>
</dbReference>
<dbReference type="GO" id="GO:0045830">
    <property type="term" value="P:positive regulation of isotype switching"/>
    <property type="evidence" value="ECO:0000250"/>
    <property type="project" value="UniProtKB"/>
</dbReference>
<dbReference type="GO" id="GO:0035019">
    <property type="term" value="P:somatic stem cell population maintenance"/>
    <property type="evidence" value="ECO:0007669"/>
    <property type="project" value="Ensembl"/>
</dbReference>
<dbReference type="GO" id="GO:0031509">
    <property type="term" value="P:subtelomeric heterochromatin formation"/>
    <property type="evidence" value="ECO:0000250"/>
    <property type="project" value="BHF-UCL"/>
</dbReference>
<dbReference type="GO" id="GO:0000723">
    <property type="term" value="P:telomere maintenance"/>
    <property type="evidence" value="ECO:0000250"/>
    <property type="project" value="BHF-UCL"/>
</dbReference>
<dbReference type="GO" id="GO:0043247">
    <property type="term" value="P:telomere maintenance in response to DNA damage"/>
    <property type="evidence" value="ECO:0000314"/>
    <property type="project" value="BHF-UCL"/>
</dbReference>
<dbReference type="CDD" id="cd14267">
    <property type="entry name" value="Rif1_CTD_C-II_like"/>
    <property type="match status" value="1"/>
</dbReference>
<dbReference type="FunFam" id="1.25.10.10:FF:000255">
    <property type="entry name" value="Telomere-associated protein RIF1 isoform 1"/>
    <property type="match status" value="1"/>
</dbReference>
<dbReference type="Gene3D" id="1.25.10.10">
    <property type="entry name" value="Leucine-rich Repeat Variant"/>
    <property type="match status" value="1"/>
</dbReference>
<dbReference type="InterPro" id="IPR011989">
    <property type="entry name" value="ARM-like"/>
</dbReference>
<dbReference type="InterPro" id="IPR016024">
    <property type="entry name" value="ARM-type_fold"/>
</dbReference>
<dbReference type="InterPro" id="IPR022031">
    <property type="entry name" value="Rif1_N"/>
</dbReference>
<dbReference type="PANTHER" id="PTHR22928">
    <property type="entry name" value="TELOMERE-ASSOCIATED PROTEIN RIF1"/>
    <property type="match status" value="1"/>
</dbReference>
<dbReference type="PANTHER" id="PTHR22928:SF3">
    <property type="entry name" value="TELOMERE-ASSOCIATED PROTEIN RIF1"/>
    <property type="match status" value="1"/>
</dbReference>
<dbReference type="Pfam" id="PF12231">
    <property type="entry name" value="Rif1_N"/>
    <property type="match status" value="1"/>
</dbReference>
<dbReference type="SUPFAM" id="SSF48371">
    <property type="entry name" value="ARM repeat"/>
    <property type="match status" value="1"/>
</dbReference>
<organism>
    <name type="scientific">Homo sapiens</name>
    <name type="common">Human</name>
    <dbReference type="NCBI Taxonomy" id="9606"/>
    <lineage>
        <taxon>Eukaryota</taxon>
        <taxon>Metazoa</taxon>
        <taxon>Chordata</taxon>
        <taxon>Craniata</taxon>
        <taxon>Vertebrata</taxon>
        <taxon>Euteleostomi</taxon>
        <taxon>Mammalia</taxon>
        <taxon>Eutheria</taxon>
        <taxon>Euarchontoglires</taxon>
        <taxon>Primates</taxon>
        <taxon>Haplorrhini</taxon>
        <taxon>Catarrhini</taxon>
        <taxon>Hominidae</taxon>
        <taxon>Homo</taxon>
    </lineage>
</organism>
<gene>
    <name evidence="14 19" type="primary">RIF1</name>
</gene>
<sequence length="2472" mass="274466">MTARGQSPLAPLLETLEDPSASHGGQTDAYLTLTSRMTGEEGKEVITEIEKKLPRLYKVLKTHISSQNSELSSAALQALGFCLYNPKITSELSEANALELLSKLNDTIKNSDKNVRTRALWVISKQTFPSEVVGKMVSSIIDSLEILFNKGETHSAVVDFEALNVIVRLIEQAPIQMGEEAVRWAKLVIPLVVHSAQKVHLRGATALEMGMPLLLQKQQEIASITEQLMTTKLISELQKLFMSKNETYVLKLWPLFVKLLGRTLHRSGSFINSLLQLEELGFRSGAPMIKKIAFIAWKSLIDNFALNPDILCSAKRLKLLMQPLSSIHVRTETLALTKLEVWWYLLMRLGPHLPANFEQVCVPLIQSTISIDSNASPQGNSCHVATSPGLNPMTPVHKGASSPYGAPGTPRMNLSSNLGGMATIPSIQLLGLEMLLHFLLGPEALSFAKQNKLVLSLEPLEHPLISSPSFFSKHANTLITAVHDSFVAVGKDAPDVVVSAIWKELISLVKSVTESGNKKEKPGSEVLTLLLKSLESIVKSEVFPVSKTLVLMEITIKGLPQKVLGSPAYQVANMDILNGTPALFLIQLIFNNFLECGVSDERFFLSLESLVGCVLSGPTSPLAFSDSVLNVINQNAKQLENKEHLWKMWSVIVTPLTELINQTNEVNQGDALEHNFSAIYGALTLPVNHIFSEQRFPVATMKTLLRTWSELYRAFARCAALVATAEENLCCEELSSKIMSSLEDEGFSNLLFVDRIIYIITVMVDCIDFSPYNIKYQPKVKSPQRPSDWSKKKNEPLGKLTSLFKLIVKVIYSFHTLSFKEAHSDTLFTIGNSITGIISSVLGHISLPSMIRKIFATLTRPLALFYENSKLDEVPKVYSCLNNKLEKLLGEIIACLQFSYTGTYDSELLEQLSPLLCIIFLHKNKQIRKQSAQFWNATFAKVMMLVYPEELKPVLTQAKQKFLLLLPGLETVEMMEESSGPYSDGTENSQLNVKISGMERKSNGKRDSFLAQTKNKKENMKPAAKLKLESSSLKVKGEILLEEEKSTDFVFIPPEGKDAKERILTDHQKEVLKTKRCDIPAMYNNLDVSQDTLFTQYSQEEPMEIPTLTRKPKEDSKMMITEEQMDSDIVIPQDVTEDCGMAEHLEKSSLSNNECGSLDKTSPEMSNSNNDERKKALISSRKTSTECASSTENSFVVSSSSVSNTTVAGTPPYPTSRRQTFITLEKFDGSENRPFSPSPLNNISSTVTVKNNQETMIKTDFLPKAKQREGTFSKSDSEKIVNGTKRSSRRAGKAEQTGNKRSKPLMRSEPEKNTEESVEGIVVLENNPPGLLNQTECVSDNQVHLSESTMEHDNTKLKAATVENAVLLETNTVEEKNVEINLESKENTPPVVISADQMVNEDSQVQITPNQKTLRRSSRRRSEVVESTTESQDKENSHQKKERRKEEEKPLQKSPLHIKDDVLPKQKLIAEQTLQENLIEKGSNLHEKTLGETSANAETEQNKKKADPENIKSEGDGTQDIVDKSSEKLVRGRTRYQTRRASQGLLSSIENSESDSSEAKEEGSRKKRSGKWKNKSNESVDIQDQEEKVVKQECIKAENQSHDYKATSEEDVSIKSPICEKQDESNTVICQDSTVTSDLLQVPDDLPNVCEEKNETSKYAEYSFTSLPVPESNLRTRNAIKRLHKRDSFDNCSLGESSKIGISDISSLSEKTFQTLECQHKRSRRVRRSKGCDCCGEKSQPQEKSLIGLKNTENNDVEISETKKADVQAPVSPSETSQANPYSEGQFLDEHHSVNFHLGLKEDNDTINDSLIVSETKSKENTMQESLPSGIVNFREEICDMDSSEAMSLESQESPNENFKTVGPCLGDSKNVSQESLETKEEKPEETPKMELSLENVTVEGNACKVTESNLEKAKTMELNVGNEASFHGQERTKTGISEEAAIEENKRNDDSEADTAKLNAKEVATEEFNSDISLSDNTTPVKLNAQTEISEQTAAGELDGGNDVSDLHSSEETNTKMKNNEEMMIGEAMAETGHDGETENEGITTKTSKPDEAETNMLTAEMDNFVCDTVEMSTEEGIIDANKTETNTEYSKSEEKLDNNQMVMESDILQEDHHTSQKVEEPSQCLASGTAISELIIEDNNASPQKLRELDPSLVSANDSPSGMQTRCVWSPLASPSTSILKRGLKRSQEDEISSPVNKVRRVSFADPIYQAGLADDIDRRCSIVRSHSSNSSPIGKSVKTSPTTQSKHNTTSAKGFLSPGSRSPKFKSSKKCLISEMAKESIPCPTESVYPPLVNCVAPVDIILPQITSNMWARGLGQLIRAKNIKTIGDLSTLTASEIKTLPIRSPKVSNVKKALRIYHEQQVKTRGLEEIPVFDISEKTVNGIENKSLSPDEERLVSDIIDPVALEIPLSKNLLAQISALALQLDSEDLHNYSGSQLFEMHEKLSCMANSVIKNLQSRWRSPSHENSI</sequence>
<proteinExistence type="evidence at protein level"/>
<feature type="chain" id="PRO_0000097333" description="Telomere-associated protein RIF1">
    <location>
        <begin position="1"/>
        <end position="2472"/>
    </location>
</feature>
<feature type="region of interest" description="Disordered" evidence="2">
    <location>
        <begin position="1"/>
        <end position="25"/>
    </location>
</feature>
<feature type="region of interest" description="Disordered" evidence="2">
    <location>
        <begin position="1145"/>
        <end position="1192"/>
    </location>
</feature>
<feature type="region of interest" description="Disordered" evidence="2">
    <location>
        <begin position="1265"/>
        <end position="1318"/>
    </location>
</feature>
<feature type="region of interest" description="Disordered" evidence="2">
    <location>
        <begin position="1398"/>
        <end position="1464"/>
    </location>
</feature>
<feature type="region of interest" description="Disordered" evidence="2">
    <location>
        <begin position="1479"/>
        <end position="1587"/>
    </location>
</feature>
<feature type="region of interest" description="Disordered" evidence="2">
    <location>
        <begin position="1762"/>
        <end position="1782"/>
    </location>
</feature>
<feature type="region of interest" description="Disordered" evidence="2">
    <location>
        <begin position="1846"/>
        <end position="1889"/>
    </location>
</feature>
<feature type="region of interest" description="Interaction with condensed chromosomes in telophase">
    <location>
        <begin position="1924"/>
        <end position="2472"/>
    </location>
</feature>
<feature type="region of interest" description="Disordered" evidence="2">
    <location>
        <begin position="1992"/>
        <end position="2021"/>
    </location>
</feature>
<feature type="region of interest" description="Interaction with ERCC6" evidence="10">
    <location>
        <begin position="2170"/>
        <end position="2446"/>
    </location>
</feature>
<feature type="region of interest" description="Disordered" evidence="2">
    <location>
        <begin position="2227"/>
        <end position="2269"/>
    </location>
</feature>
<feature type="compositionally biased region" description="Polar residues" evidence="2">
    <location>
        <begin position="1148"/>
        <end position="1169"/>
    </location>
</feature>
<feature type="compositionally biased region" description="Basic and acidic residues" evidence="2">
    <location>
        <begin position="1265"/>
        <end position="1279"/>
    </location>
</feature>
<feature type="compositionally biased region" description="Basic and acidic residues" evidence="2">
    <location>
        <begin position="1306"/>
        <end position="1315"/>
    </location>
</feature>
<feature type="compositionally biased region" description="Polar residues" evidence="2">
    <location>
        <begin position="1400"/>
        <end position="1412"/>
    </location>
</feature>
<feature type="compositionally biased region" description="Basic and acidic residues" evidence="2">
    <location>
        <begin position="1431"/>
        <end position="1464"/>
    </location>
</feature>
<feature type="compositionally biased region" description="Basic and acidic residues" evidence="2">
    <location>
        <begin position="1500"/>
        <end position="1530"/>
    </location>
</feature>
<feature type="compositionally biased region" description="Basic residues" evidence="2">
    <location>
        <begin position="1565"/>
        <end position="1574"/>
    </location>
</feature>
<feature type="compositionally biased region" description="Polar residues" evidence="2">
    <location>
        <begin position="1771"/>
        <end position="1782"/>
    </location>
</feature>
<feature type="compositionally biased region" description="Polar residues" evidence="2">
    <location>
        <begin position="1846"/>
        <end position="1859"/>
    </location>
</feature>
<feature type="compositionally biased region" description="Basic and acidic residues" evidence="2">
    <location>
        <begin position="1877"/>
        <end position="1889"/>
    </location>
</feature>
<feature type="compositionally biased region" description="Basic and acidic residues" evidence="2">
    <location>
        <begin position="2006"/>
        <end position="2021"/>
    </location>
</feature>
<feature type="compositionally biased region" description="Polar residues" evidence="2">
    <location>
        <begin position="2227"/>
        <end position="2255"/>
    </location>
</feature>
<feature type="modified residue" description="Phosphoserine" evidence="23 27">
    <location>
        <position position="402"/>
    </location>
</feature>
<feature type="modified residue" description="Phosphothreonine" evidence="20 23">
    <location>
        <position position="409"/>
    </location>
</feature>
<feature type="modified residue" description="Phosphoserine" evidence="26 27">
    <location>
        <position position="782"/>
    </location>
</feature>
<feature type="modified residue" description="Phosphoserine" evidence="24">
    <location>
        <position position="979"/>
    </location>
</feature>
<feature type="modified residue" description="Phosphoserine" evidence="27">
    <location>
        <position position="1008"/>
    </location>
</feature>
<feature type="modified residue" description="Phosphothreonine" evidence="24">
    <location>
        <position position="1047"/>
    </location>
</feature>
<feature type="modified residue" description="Phosphoserine" evidence="23 27">
    <location>
        <position position="1162"/>
    </location>
</feature>
<feature type="modified residue" description="Phosphothreonine" evidence="27">
    <location>
        <position position="1220"/>
    </location>
</feature>
<feature type="modified residue" description="Phosphoserine" evidence="23 27">
    <location>
        <position position="1236"/>
    </location>
</feature>
<feature type="modified residue" description="Phosphoserine" evidence="23 25 27">
    <location>
        <position position="1238"/>
    </location>
</feature>
<feature type="modified residue" description="Phosphoserine" evidence="23 26 27">
    <location>
        <position position="1422"/>
    </location>
</feature>
<feature type="modified residue" description="Phosphoserine" evidence="21 25 26 27">
    <location>
        <position position="1454"/>
    </location>
</feature>
<feature type="modified residue" description="Phosphoserine" evidence="22 27">
    <location>
        <position position="1513"/>
    </location>
</feature>
<feature type="modified residue" description="Phosphothreonine" evidence="22">
    <location>
        <position position="1518"/>
    </location>
</feature>
<feature type="modified residue" description="Phosphoserine" evidence="22 26 27">
    <location>
        <position position="1542"/>
    </location>
</feature>
<feature type="modified residue" description="Phosphoserine" evidence="24 27">
    <location>
        <position position="1552"/>
    </location>
</feature>
<feature type="modified residue" description="Phosphoserine" evidence="23 24 26 27">
    <location>
        <position position="1554"/>
    </location>
</feature>
<feature type="modified residue" description="Phosphoserine" evidence="27">
    <location>
        <position position="1556"/>
    </location>
</feature>
<feature type="modified residue" description="Phosphoserine" evidence="1">
    <location>
        <position position="1564"/>
    </location>
</feature>
<feature type="modified residue" description="Phosphoserine" evidence="26">
    <location>
        <position position="1576"/>
    </location>
</feature>
<feature type="modified residue" description="Phosphoserine" evidence="20 24 25 26 27">
    <location>
        <position position="1579"/>
    </location>
</feature>
<feature type="modified residue" description="Phosphoserine" evidence="27">
    <location>
        <position position="1613"/>
    </location>
</feature>
<feature type="modified residue" description="Phosphoserine" evidence="23 27">
    <location>
        <position position="1616"/>
    </location>
</feature>
<feature type="modified residue" description="Phosphoserine" evidence="21 23 24 25 26 27">
    <location>
        <position position="1688"/>
    </location>
</feature>
<feature type="modified residue" description="Phosphoserine" evidence="23">
    <location>
        <position position="1693"/>
    </location>
</feature>
<feature type="modified residue" description="Phosphoserine" evidence="27">
    <location>
        <position position="1706"/>
    </location>
</feature>
<feature type="modified residue" description="Phosphoserine" evidence="27">
    <location>
        <position position="1709"/>
    </location>
</feature>
<feature type="modified residue" description="Phosphothreonine" evidence="24 27">
    <location>
        <position position="1806"/>
    </location>
</feature>
<feature type="modified residue" description="Phosphoserine" evidence="23 25 27">
    <location>
        <position position="1810"/>
    </location>
</feature>
<feature type="modified residue" description="Phosphoserine" evidence="25 26">
    <location>
        <position position="1873"/>
    </location>
</feature>
<feature type="modified residue" description="Phosphoserine" evidence="25">
    <location>
        <position position="1876"/>
    </location>
</feature>
<feature type="modified residue" description="Phosphoserine" evidence="27">
    <location>
        <position position="1926"/>
    </location>
</feature>
<feature type="modified residue" description="Phosphoserine" evidence="24">
    <location>
        <position position="1971"/>
    </location>
</feature>
<feature type="modified residue" description="Phosphoserine" evidence="23 26 27">
    <location>
        <position position="2144"/>
    </location>
</feature>
<feature type="modified residue" description="Phosphoserine" evidence="25 26 27">
    <location>
        <position position="2161"/>
    </location>
</feature>
<feature type="modified residue" description="Phosphothreonine" evidence="26">
    <location>
        <position position="2167"/>
    </location>
</feature>
<feature type="modified residue" description="Phosphoserine" evidence="23 25 27">
    <location>
        <position position="2172"/>
    </location>
</feature>
<feature type="modified residue" description="Phosphoserine" evidence="25 27">
    <location>
        <position position="2176"/>
    </location>
</feature>
<feature type="modified residue" description="Phosphoserine" evidence="1">
    <location>
        <position position="2195"/>
    </location>
</feature>
<feature type="modified residue" description="Phosphoserine" evidence="23 24 25 27">
    <location>
        <position position="2196"/>
    </location>
</feature>
<feature type="modified residue" description="Phosphoserine" evidence="23 25 27">
    <location>
        <position position="2205"/>
    </location>
</feature>
<feature type="modified residue" description="Phosphoserine" evidence="23">
    <location>
        <position position="2260"/>
    </location>
</feature>
<feature type="modified residue" description="Phosphoserine" evidence="23 27">
    <location>
        <position position="2339"/>
    </location>
</feature>
<feature type="modified residue" description="Phosphoserine" evidence="23">
    <location>
        <position position="2391"/>
    </location>
</feature>
<feature type="modified residue" description="Phosphoserine" evidence="23 25 26">
    <location>
        <position position="2393"/>
    </location>
</feature>
<feature type="modified residue" description="Phosphoserine" evidence="23">
    <location>
        <position position="2465"/>
    </location>
</feature>
<feature type="modified residue" description="Phosphoserine" evidence="23">
    <location>
        <position position="2471"/>
    </location>
</feature>
<feature type="splice variant" id="VSP_014431" description="In isoform 2." evidence="15 16">
    <location>
        <begin position="2250"/>
        <end position="2275"/>
    </location>
</feature>
<feature type="sequence variant" id="VAR_022788" description="In dbSNP:rs2444263." evidence="3 5">
    <original>G</original>
    <variation>S</variation>
    <location>
        <position position="836"/>
    </location>
</feature>
<feature type="sequence variant" id="VAR_022789" description="In dbSNP:rs2123465." evidence="3 5">
    <original>V</original>
    <variation>M</variation>
    <location>
        <position position="1362"/>
    </location>
</feature>
<feature type="sequence variant" id="VAR_022790" description="In dbSNP:rs3732305.">
    <original>R</original>
    <variation>G</variation>
    <location>
        <position position="1686"/>
    </location>
</feature>
<feature type="sequence variant" id="VAR_035983" description="In a breast cancer sample; somatic mutation." evidence="6">
    <original>E</original>
    <variation>K</variation>
    <location>
        <position position="1784"/>
    </location>
</feature>
<feature type="sequence variant" id="VAR_022791" description="In dbSNP:rs2444258.">
    <original>V</original>
    <variation>I</variation>
    <location>
        <position position="1862"/>
    </location>
</feature>
<feature type="sequence variant" id="VAR_035984" description="In a breast cancer sample; somatic mutation." evidence="6">
    <original>D</original>
    <variation>H</variation>
    <location>
        <position position="1955"/>
    </location>
</feature>
<feature type="sequence variant" id="VAR_022792" description="In dbSNP:rs2444257." evidence="4 5 7">
    <original>N</original>
    <variation>Y</variation>
    <location>
        <position position="2021"/>
    </location>
</feature>
<feature type="sequence variant" id="VAR_022793" description="In dbSNP:rs16830057.">
    <original>M</original>
    <variation>R</variation>
    <location>
        <position position="2165"/>
    </location>
</feature>
<feature type="sequence variant" id="VAR_022794" description="In dbSNP:rs1065177." evidence="3 4 5 7 13">
    <original>L</original>
    <variation>V</variation>
    <location>
        <position position="2418"/>
    </location>
</feature>
<feature type="sequence conflict" description="In Ref. 1; AAT40745." evidence="17" ref="1">
    <original>N</original>
    <variation>D</variation>
    <location>
        <position position="96"/>
    </location>
</feature>
<feature type="sequence conflict" description="In Ref. 6; BAA91705." evidence="17" ref="6">
    <original>A</original>
    <variation>P</variation>
    <location>
        <position position="699"/>
    </location>
</feature>
<feature type="sequence conflict" description="In Ref. 6; BAA91705." evidence="17" ref="6">
    <original>M</original>
    <variation>V</variation>
    <location>
        <position position="1256"/>
    </location>
</feature>
<feature type="sequence conflict" description="In Ref. 6; BAB85058." evidence="17" ref="6">
    <original>R</original>
    <variation>G</variation>
    <location>
        <position position="2316"/>
    </location>
</feature>
<feature type="sequence conflict" description="In Ref. 6; BAB85058." evidence="17" ref="6">
    <original>L</original>
    <variation>F</variation>
    <location>
        <position position="2392"/>
    </location>
</feature>
<feature type="sequence conflict" description="In Ref. 6; BAB85058." evidence="17" ref="6">
    <original>HE</original>
    <variation>RV</variation>
    <location>
        <begin position="2445"/>
        <end position="2446"/>
    </location>
</feature>
<feature type="sequence conflict" description="In Ref. 6; BAB85058." evidence="17" ref="6">
    <original>R</original>
    <variation>G</variation>
    <location>
        <position position="2464"/>
    </location>
</feature>